<proteinExistence type="inferred from homology"/>
<sequence length="498" mass="56487">MAIMRELVDAYFKEHGLIDHQIESYNDFVENRLQKIIDEVGYIETEITGGYKVKLGKIKVGKPVIKEADGSIRPITPMEARIRDLTYSVPLYLEMTPIIGEGEDAREGETVEVYIGELPVMLGSKICHLYGKSREELIDLGEDPEDPFGYFIINGTEKVLITQEDLIPNRILCEKAERSGKIVDVAKVFSTRHGFRALCTVERHPDGLLYATFPGMPGQIPLVILMKALGAETDKDIIESIDDERFFMEIVLNIQEIREEHNINSPEDALEFIGKRVAPGQAKDYRLKRAETVLCNYLLPHLGVTKEDFPKKIRFLGIMARNALELYFGYRGEDDKDHYAYKRAKLAGDLMEDLFRYAFSQLVKDIKYQLERQTLRNKTPSIQAAVRSDILTERIKHAMATGTWVGGKTGVSQLLDRTSYLATNSQLRRIVSPLSRSQPHFEARELHGTHWGKICPSETPEGPNCGLVKNFAIMCKVTREEDDSKVIELLKSFGINVS</sequence>
<dbReference type="EC" id="2.7.7.6" evidence="2"/>
<dbReference type="EMBL" id="L77117">
    <property type="protein sequence ID" value="AAB99043.1"/>
    <property type="molecule type" value="Genomic_DNA"/>
</dbReference>
<dbReference type="PIR" id="G64429">
    <property type="entry name" value="G64429"/>
</dbReference>
<dbReference type="SMR" id="Q58444"/>
<dbReference type="FunCoup" id="Q58444">
    <property type="interactions" value="1"/>
</dbReference>
<dbReference type="STRING" id="243232.MJ_1040"/>
<dbReference type="PaxDb" id="243232-MJ_1040"/>
<dbReference type="EnsemblBacteria" id="AAB99043">
    <property type="protein sequence ID" value="AAB99043"/>
    <property type="gene ID" value="MJ_1040"/>
</dbReference>
<dbReference type="KEGG" id="mja:MJ_1040"/>
<dbReference type="eggNOG" id="arCOG01762">
    <property type="taxonomic scope" value="Archaea"/>
</dbReference>
<dbReference type="HOGENOM" id="CLU_000524_5_3_2"/>
<dbReference type="InParanoid" id="Q58444"/>
<dbReference type="PhylomeDB" id="Q58444"/>
<dbReference type="Proteomes" id="UP000000805">
    <property type="component" value="Chromosome"/>
</dbReference>
<dbReference type="GO" id="GO:0005737">
    <property type="term" value="C:cytoplasm"/>
    <property type="evidence" value="ECO:0007669"/>
    <property type="project" value="UniProtKB-SubCell"/>
</dbReference>
<dbReference type="GO" id="GO:0000428">
    <property type="term" value="C:DNA-directed RNA polymerase complex"/>
    <property type="evidence" value="ECO:0007669"/>
    <property type="project" value="UniProtKB-KW"/>
</dbReference>
<dbReference type="GO" id="GO:0003677">
    <property type="term" value="F:DNA binding"/>
    <property type="evidence" value="ECO:0007669"/>
    <property type="project" value="UniProtKB-KW"/>
</dbReference>
<dbReference type="GO" id="GO:0003899">
    <property type="term" value="F:DNA-directed RNA polymerase activity"/>
    <property type="evidence" value="ECO:0007669"/>
    <property type="project" value="UniProtKB-EC"/>
</dbReference>
<dbReference type="GO" id="GO:0032549">
    <property type="term" value="F:ribonucleoside binding"/>
    <property type="evidence" value="ECO:0007669"/>
    <property type="project" value="InterPro"/>
</dbReference>
<dbReference type="GO" id="GO:0006351">
    <property type="term" value="P:DNA-templated transcription"/>
    <property type="evidence" value="ECO:0007669"/>
    <property type="project" value="InterPro"/>
</dbReference>
<dbReference type="Gene3D" id="3.90.1100.10">
    <property type="match status" value="1"/>
</dbReference>
<dbReference type="Gene3D" id="3.90.1110.10">
    <property type="entry name" value="RNA polymerase Rpb2, domain 2"/>
    <property type="match status" value="1"/>
</dbReference>
<dbReference type="InterPro" id="IPR015712">
    <property type="entry name" value="DNA-dir_RNA_pol_su2"/>
</dbReference>
<dbReference type="InterPro" id="IPR007644">
    <property type="entry name" value="RNA_pol_bsu_protrusion"/>
</dbReference>
<dbReference type="InterPro" id="IPR007642">
    <property type="entry name" value="RNA_pol_Rpb2_2"/>
</dbReference>
<dbReference type="InterPro" id="IPR037034">
    <property type="entry name" value="RNA_pol_Rpb2_2_sf"/>
</dbReference>
<dbReference type="InterPro" id="IPR007645">
    <property type="entry name" value="RNA_pol_Rpb2_3"/>
</dbReference>
<dbReference type="NCBIfam" id="NF007175">
    <property type="entry name" value="PRK09606.1"/>
    <property type="match status" value="1"/>
</dbReference>
<dbReference type="PANTHER" id="PTHR20856">
    <property type="entry name" value="DNA-DIRECTED RNA POLYMERASE I SUBUNIT 2"/>
    <property type="match status" value="1"/>
</dbReference>
<dbReference type="Pfam" id="PF04563">
    <property type="entry name" value="RNA_pol_Rpb2_1"/>
    <property type="match status" value="1"/>
</dbReference>
<dbReference type="Pfam" id="PF04561">
    <property type="entry name" value="RNA_pol_Rpb2_2"/>
    <property type="match status" value="1"/>
</dbReference>
<dbReference type="Pfam" id="PF04565">
    <property type="entry name" value="RNA_pol_Rpb2_3"/>
    <property type="match status" value="1"/>
</dbReference>
<dbReference type="SUPFAM" id="SSF64484">
    <property type="entry name" value="beta and beta-prime subunits of DNA dependent RNA-polymerase"/>
    <property type="match status" value="1"/>
</dbReference>
<feature type="chain" id="PRO_0000074034" description="DNA-directed RNA polymerase subunit Rpo2N">
    <location>
        <begin position="1"/>
        <end position="498"/>
    </location>
</feature>
<protein>
    <recommendedName>
        <fullName evidence="4">DNA-directed RNA polymerase subunit Rpo2N</fullName>
        <ecNumber evidence="2">2.7.7.6</ecNumber>
    </recommendedName>
    <alternativeName>
        <fullName evidence="3">DNA-directed RNA polymerase subunit B''</fullName>
    </alternativeName>
</protein>
<keyword id="KW-0963">Cytoplasm</keyword>
<keyword id="KW-0238">DNA-binding</keyword>
<keyword id="KW-0240">DNA-directed RNA polymerase</keyword>
<keyword id="KW-0548">Nucleotidyltransferase</keyword>
<keyword id="KW-1185">Reference proteome</keyword>
<keyword id="KW-0804">Transcription</keyword>
<keyword id="KW-0808">Transferase</keyword>
<evidence type="ECO:0000250" key="1">
    <source>
        <dbReference type="UniProtKB" id="B8YB55"/>
    </source>
</evidence>
<evidence type="ECO:0000250" key="2">
    <source>
        <dbReference type="UniProtKB" id="P11513"/>
    </source>
</evidence>
<evidence type="ECO:0000303" key="3">
    <source>
    </source>
</evidence>
<evidence type="ECO:0000305" key="4"/>
<accession>Q58444</accession>
<gene>
    <name evidence="4" type="primary">rpo2N</name>
    <name evidence="3" type="synonym">rpoB2</name>
    <name type="ordered locus">MJ1040</name>
</gene>
<comment type="function">
    <text evidence="1">DNA-dependent RNA polymerase (RNAP) catalyzes the transcription of DNA into RNA using the four ribonucleoside triphosphates as substrates. The Rpo2 subunit (Rpo2N and Rpo2C in this organism) is implicated in DNA promoter recognition and in nucleotide binding.</text>
</comment>
<comment type="catalytic activity">
    <reaction evidence="2">
        <text>RNA(n) + a ribonucleoside 5'-triphosphate = RNA(n+1) + diphosphate</text>
        <dbReference type="Rhea" id="RHEA:21248"/>
        <dbReference type="Rhea" id="RHEA-COMP:14527"/>
        <dbReference type="Rhea" id="RHEA-COMP:17342"/>
        <dbReference type="ChEBI" id="CHEBI:33019"/>
        <dbReference type="ChEBI" id="CHEBI:61557"/>
        <dbReference type="ChEBI" id="CHEBI:140395"/>
        <dbReference type="EC" id="2.7.7.6"/>
    </reaction>
</comment>
<comment type="subunit">
    <text evidence="1">Part of the RNA polymerase complex.</text>
</comment>
<comment type="subcellular location">
    <subcellularLocation>
        <location evidence="1">Cytoplasm</location>
    </subcellularLocation>
</comment>
<comment type="similarity">
    <text evidence="4">Belongs to the RNA polymerase beta chain family.</text>
</comment>
<name>RPO2N_METJA</name>
<organism>
    <name type="scientific">Methanocaldococcus jannaschii (strain ATCC 43067 / DSM 2661 / JAL-1 / JCM 10045 / NBRC 100440)</name>
    <name type="common">Methanococcus jannaschii</name>
    <dbReference type="NCBI Taxonomy" id="243232"/>
    <lineage>
        <taxon>Archaea</taxon>
        <taxon>Methanobacteriati</taxon>
        <taxon>Methanobacteriota</taxon>
        <taxon>Methanomada group</taxon>
        <taxon>Methanococci</taxon>
        <taxon>Methanococcales</taxon>
        <taxon>Methanocaldococcaceae</taxon>
        <taxon>Methanocaldococcus</taxon>
    </lineage>
</organism>
<reference key="1">
    <citation type="journal article" date="1996" name="Science">
        <title>Complete genome sequence of the methanogenic archaeon, Methanococcus jannaschii.</title>
        <authorList>
            <person name="Bult C.J."/>
            <person name="White O."/>
            <person name="Olsen G.J."/>
            <person name="Zhou L."/>
            <person name="Fleischmann R.D."/>
            <person name="Sutton G.G."/>
            <person name="Blake J.A."/>
            <person name="FitzGerald L.M."/>
            <person name="Clayton R.A."/>
            <person name="Gocayne J.D."/>
            <person name="Kerlavage A.R."/>
            <person name="Dougherty B.A."/>
            <person name="Tomb J.-F."/>
            <person name="Adams M.D."/>
            <person name="Reich C.I."/>
            <person name="Overbeek R."/>
            <person name="Kirkness E.F."/>
            <person name="Weinstock K.G."/>
            <person name="Merrick J.M."/>
            <person name="Glodek A."/>
            <person name="Scott J.L."/>
            <person name="Geoghagen N.S.M."/>
            <person name="Weidman J.F."/>
            <person name="Fuhrmann J.L."/>
            <person name="Nguyen D."/>
            <person name="Utterback T.R."/>
            <person name="Kelley J.M."/>
            <person name="Peterson J.D."/>
            <person name="Sadow P.W."/>
            <person name="Hanna M.C."/>
            <person name="Cotton M.D."/>
            <person name="Roberts K.M."/>
            <person name="Hurst M.A."/>
            <person name="Kaine B.P."/>
            <person name="Borodovsky M."/>
            <person name="Klenk H.-P."/>
            <person name="Fraser C.M."/>
            <person name="Smith H.O."/>
            <person name="Woese C.R."/>
            <person name="Venter J.C."/>
        </authorList>
    </citation>
    <scope>NUCLEOTIDE SEQUENCE [LARGE SCALE GENOMIC DNA]</scope>
    <source>
        <strain>ATCC 43067 / DSM 2661 / JAL-1 / JCM 10045 / NBRC 100440</strain>
    </source>
</reference>